<gene>
    <name evidence="9 11" type="primary">RNF185</name>
</gene>
<reference key="1">
    <citation type="submission" date="2005-11" db="EMBL/GenBank/DDBJ databases">
        <title>Multiple splice variants of the gene coding for ring finger protein RNF185.</title>
        <authorList>
            <person name="Martinez Gamboa L."/>
            <person name="Stuhlmueller B."/>
            <person name="Burmester G.R."/>
        </authorList>
    </citation>
    <scope>NUCLEOTIDE SEQUENCE [MRNA] (ISOFORMS 1 AND 2)</scope>
    <source>
        <tissue>Pancreas</tissue>
        <tissue>Testis</tissue>
    </source>
</reference>
<reference key="2">
    <citation type="journal article" date="2004" name="Genome Biol.">
        <title>A genome annotation-driven approach to cloning the human ORFeome.</title>
        <authorList>
            <person name="Collins J.E."/>
            <person name="Wright C.L."/>
            <person name="Edwards C.A."/>
            <person name="Davis M.P."/>
            <person name="Grinham J.A."/>
            <person name="Cole C.G."/>
            <person name="Goward M.E."/>
            <person name="Aguado B."/>
            <person name="Mallya M."/>
            <person name="Mokrab Y."/>
            <person name="Huckle E.J."/>
            <person name="Beare D.M."/>
            <person name="Dunham I."/>
        </authorList>
    </citation>
    <scope>NUCLEOTIDE SEQUENCE [LARGE SCALE MRNA] (ISOFORM 1)</scope>
</reference>
<reference key="3">
    <citation type="journal article" date="2004" name="Nat. Genet.">
        <title>Complete sequencing and characterization of 21,243 full-length human cDNAs.</title>
        <authorList>
            <person name="Ota T."/>
            <person name="Suzuki Y."/>
            <person name="Nishikawa T."/>
            <person name="Otsuki T."/>
            <person name="Sugiyama T."/>
            <person name="Irie R."/>
            <person name="Wakamatsu A."/>
            <person name="Hayashi K."/>
            <person name="Sato H."/>
            <person name="Nagai K."/>
            <person name="Kimura K."/>
            <person name="Makita H."/>
            <person name="Sekine M."/>
            <person name="Obayashi M."/>
            <person name="Nishi T."/>
            <person name="Shibahara T."/>
            <person name="Tanaka T."/>
            <person name="Ishii S."/>
            <person name="Yamamoto J."/>
            <person name="Saito K."/>
            <person name="Kawai Y."/>
            <person name="Isono Y."/>
            <person name="Nakamura Y."/>
            <person name="Nagahari K."/>
            <person name="Murakami K."/>
            <person name="Yasuda T."/>
            <person name="Iwayanagi T."/>
            <person name="Wagatsuma M."/>
            <person name="Shiratori A."/>
            <person name="Sudo H."/>
            <person name="Hosoiri T."/>
            <person name="Kaku Y."/>
            <person name="Kodaira H."/>
            <person name="Kondo H."/>
            <person name="Sugawara M."/>
            <person name="Takahashi M."/>
            <person name="Kanda K."/>
            <person name="Yokoi T."/>
            <person name="Furuya T."/>
            <person name="Kikkawa E."/>
            <person name="Omura Y."/>
            <person name="Abe K."/>
            <person name="Kamihara K."/>
            <person name="Katsuta N."/>
            <person name="Sato K."/>
            <person name="Tanikawa M."/>
            <person name="Yamazaki M."/>
            <person name="Ninomiya K."/>
            <person name="Ishibashi T."/>
            <person name="Yamashita H."/>
            <person name="Murakawa K."/>
            <person name="Fujimori K."/>
            <person name="Tanai H."/>
            <person name="Kimata M."/>
            <person name="Watanabe M."/>
            <person name="Hiraoka S."/>
            <person name="Chiba Y."/>
            <person name="Ishida S."/>
            <person name="Ono Y."/>
            <person name="Takiguchi S."/>
            <person name="Watanabe S."/>
            <person name="Yosida M."/>
            <person name="Hotuta T."/>
            <person name="Kusano J."/>
            <person name="Kanehori K."/>
            <person name="Takahashi-Fujii A."/>
            <person name="Hara H."/>
            <person name="Tanase T.-O."/>
            <person name="Nomura Y."/>
            <person name="Togiya S."/>
            <person name="Komai F."/>
            <person name="Hara R."/>
            <person name="Takeuchi K."/>
            <person name="Arita M."/>
            <person name="Imose N."/>
            <person name="Musashino K."/>
            <person name="Yuuki H."/>
            <person name="Oshima A."/>
            <person name="Sasaki N."/>
            <person name="Aotsuka S."/>
            <person name="Yoshikawa Y."/>
            <person name="Matsunawa H."/>
            <person name="Ichihara T."/>
            <person name="Shiohata N."/>
            <person name="Sano S."/>
            <person name="Moriya S."/>
            <person name="Momiyama H."/>
            <person name="Satoh N."/>
            <person name="Takami S."/>
            <person name="Terashima Y."/>
            <person name="Suzuki O."/>
            <person name="Nakagawa S."/>
            <person name="Senoh A."/>
            <person name="Mizoguchi H."/>
            <person name="Goto Y."/>
            <person name="Shimizu F."/>
            <person name="Wakebe H."/>
            <person name="Hishigaki H."/>
            <person name="Watanabe T."/>
            <person name="Sugiyama A."/>
            <person name="Takemoto M."/>
            <person name="Kawakami B."/>
            <person name="Yamazaki M."/>
            <person name="Watanabe K."/>
            <person name="Kumagai A."/>
            <person name="Itakura S."/>
            <person name="Fukuzumi Y."/>
            <person name="Fujimori Y."/>
            <person name="Komiyama M."/>
            <person name="Tashiro H."/>
            <person name="Tanigami A."/>
            <person name="Fujiwara T."/>
            <person name="Ono T."/>
            <person name="Yamada K."/>
            <person name="Fujii Y."/>
            <person name="Ozaki K."/>
            <person name="Hirao M."/>
            <person name="Ohmori Y."/>
            <person name="Kawabata A."/>
            <person name="Hikiji T."/>
            <person name="Kobatake N."/>
            <person name="Inagaki H."/>
            <person name="Ikema Y."/>
            <person name="Okamoto S."/>
            <person name="Okitani R."/>
            <person name="Kawakami T."/>
            <person name="Noguchi S."/>
            <person name="Itoh T."/>
            <person name="Shigeta K."/>
            <person name="Senba T."/>
            <person name="Matsumura K."/>
            <person name="Nakajima Y."/>
            <person name="Mizuno T."/>
            <person name="Morinaga M."/>
            <person name="Sasaki M."/>
            <person name="Togashi T."/>
            <person name="Oyama M."/>
            <person name="Hata H."/>
            <person name="Watanabe M."/>
            <person name="Komatsu T."/>
            <person name="Mizushima-Sugano J."/>
            <person name="Satoh T."/>
            <person name="Shirai Y."/>
            <person name="Takahashi Y."/>
            <person name="Nakagawa K."/>
            <person name="Okumura K."/>
            <person name="Nagase T."/>
            <person name="Nomura N."/>
            <person name="Kikuchi H."/>
            <person name="Masuho Y."/>
            <person name="Yamashita R."/>
            <person name="Nakai K."/>
            <person name="Yada T."/>
            <person name="Nakamura Y."/>
            <person name="Ohara O."/>
            <person name="Isogai T."/>
            <person name="Sugano S."/>
        </authorList>
    </citation>
    <scope>NUCLEOTIDE SEQUENCE [LARGE SCALE MRNA] (ISOFORMS 1 AND 2)</scope>
</reference>
<reference key="4">
    <citation type="journal article" date="1999" name="Nature">
        <title>The DNA sequence of human chromosome 22.</title>
        <authorList>
            <person name="Dunham I."/>
            <person name="Hunt A.R."/>
            <person name="Collins J.E."/>
            <person name="Bruskiewich R."/>
            <person name="Beare D.M."/>
            <person name="Clamp M."/>
            <person name="Smink L.J."/>
            <person name="Ainscough R."/>
            <person name="Almeida J.P."/>
            <person name="Babbage A.K."/>
            <person name="Bagguley C."/>
            <person name="Bailey J."/>
            <person name="Barlow K.F."/>
            <person name="Bates K.N."/>
            <person name="Beasley O.P."/>
            <person name="Bird C.P."/>
            <person name="Blakey S.E."/>
            <person name="Bridgeman A.M."/>
            <person name="Buck D."/>
            <person name="Burgess J."/>
            <person name="Burrill W.D."/>
            <person name="Burton J."/>
            <person name="Carder C."/>
            <person name="Carter N.P."/>
            <person name="Chen Y."/>
            <person name="Clark G."/>
            <person name="Clegg S.M."/>
            <person name="Cobley V.E."/>
            <person name="Cole C.G."/>
            <person name="Collier R.E."/>
            <person name="Connor R."/>
            <person name="Conroy D."/>
            <person name="Corby N.R."/>
            <person name="Coville G.J."/>
            <person name="Cox A.V."/>
            <person name="Davis J."/>
            <person name="Dawson E."/>
            <person name="Dhami P.D."/>
            <person name="Dockree C."/>
            <person name="Dodsworth S.J."/>
            <person name="Durbin R.M."/>
            <person name="Ellington A.G."/>
            <person name="Evans K.L."/>
            <person name="Fey J.M."/>
            <person name="Fleming K."/>
            <person name="French L."/>
            <person name="Garner A.A."/>
            <person name="Gilbert J.G.R."/>
            <person name="Goward M.E."/>
            <person name="Grafham D.V."/>
            <person name="Griffiths M.N.D."/>
            <person name="Hall C."/>
            <person name="Hall R.E."/>
            <person name="Hall-Tamlyn G."/>
            <person name="Heathcott R.W."/>
            <person name="Ho S."/>
            <person name="Holmes S."/>
            <person name="Hunt S.E."/>
            <person name="Jones M.C."/>
            <person name="Kershaw J."/>
            <person name="Kimberley A.M."/>
            <person name="King A."/>
            <person name="Laird G.K."/>
            <person name="Langford C.F."/>
            <person name="Leversha M.A."/>
            <person name="Lloyd C."/>
            <person name="Lloyd D.M."/>
            <person name="Martyn I.D."/>
            <person name="Mashreghi-Mohammadi M."/>
            <person name="Matthews L.H."/>
            <person name="Mccann O.T."/>
            <person name="Mcclay J."/>
            <person name="Mclaren S."/>
            <person name="McMurray A.A."/>
            <person name="Milne S.A."/>
            <person name="Mortimore B.J."/>
            <person name="Odell C.N."/>
            <person name="Pavitt R."/>
            <person name="Pearce A.V."/>
            <person name="Pearson D."/>
            <person name="Phillimore B.J.C.T."/>
            <person name="Phillips S.H."/>
            <person name="Plumb R.W."/>
            <person name="Ramsay H."/>
            <person name="Ramsey Y."/>
            <person name="Rogers L."/>
            <person name="Ross M.T."/>
            <person name="Scott C.E."/>
            <person name="Sehra H.K."/>
            <person name="Skuce C.D."/>
            <person name="Smalley S."/>
            <person name="Smith M.L."/>
            <person name="Soderlund C."/>
            <person name="Spragon L."/>
            <person name="Steward C.A."/>
            <person name="Sulston J.E."/>
            <person name="Swann R.M."/>
            <person name="Vaudin M."/>
            <person name="Wall M."/>
            <person name="Wallis J.M."/>
            <person name="Whiteley M.N."/>
            <person name="Willey D.L."/>
            <person name="Williams L."/>
            <person name="Williams S.A."/>
            <person name="Williamson H."/>
            <person name="Wilmer T.E."/>
            <person name="Wilming L."/>
            <person name="Wright C.L."/>
            <person name="Hubbard T."/>
            <person name="Bentley D.R."/>
            <person name="Beck S."/>
            <person name="Rogers J."/>
            <person name="Shimizu N."/>
            <person name="Minoshima S."/>
            <person name="Kawasaki K."/>
            <person name="Sasaki T."/>
            <person name="Asakawa S."/>
            <person name="Kudoh J."/>
            <person name="Shintani A."/>
            <person name="Shibuya K."/>
            <person name="Yoshizaki Y."/>
            <person name="Aoki N."/>
            <person name="Mitsuyama S."/>
            <person name="Roe B.A."/>
            <person name="Chen F."/>
            <person name="Chu L."/>
            <person name="Crabtree J."/>
            <person name="Deschamps S."/>
            <person name="Do A."/>
            <person name="Do T."/>
            <person name="Dorman A."/>
            <person name="Fang F."/>
            <person name="Fu Y."/>
            <person name="Hu P."/>
            <person name="Hua A."/>
            <person name="Kenton S."/>
            <person name="Lai H."/>
            <person name="Lao H.I."/>
            <person name="Lewis J."/>
            <person name="Lewis S."/>
            <person name="Lin S.-P."/>
            <person name="Loh P."/>
            <person name="Malaj E."/>
            <person name="Nguyen T."/>
            <person name="Pan H."/>
            <person name="Phan S."/>
            <person name="Qi S."/>
            <person name="Qian Y."/>
            <person name="Ray L."/>
            <person name="Ren Q."/>
            <person name="Shaull S."/>
            <person name="Sloan D."/>
            <person name="Song L."/>
            <person name="Wang Q."/>
            <person name="Wang Y."/>
            <person name="Wang Z."/>
            <person name="White J."/>
            <person name="Willingham D."/>
            <person name="Wu H."/>
            <person name="Yao Z."/>
            <person name="Zhan M."/>
            <person name="Zhang G."/>
            <person name="Chissoe S."/>
            <person name="Murray J."/>
            <person name="Miller N."/>
            <person name="Minx P."/>
            <person name="Fulton R."/>
            <person name="Johnson D."/>
            <person name="Bemis G."/>
            <person name="Bentley D."/>
            <person name="Bradshaw H."/>
            <person name="Bourne S."/>
            <person name="Cordes M."/>
            <person name="Du Z."/>
            <person name="Fulton L."/>
            <person name="Goela D."/>
            <person name="Graves T."/>
            <person name="Hawkins J."/>
            <person name="Hinds K."/>
            <person name="Kemp K."/>
            <person name="Latreille P."/>
            <person name="Layman D."/>
            <person name="Ozersky P."/>
            <person name="Rohlfing T."/>
            <person name="Scheet P."/>
            <person name="Walker C."/>
            <person name="Wamsley A."/>
            <person name="Wohldmann P."/>
            <person name="Pepin K."/>
            <person name="Nelson J."/>
            <person name="Korf I."/>
            <person name="Bedell J.A."/>
            <person name="Hillier L.W."/>
            <person name="Mardis E."/>
            <person name="Waterston R."/>
            <person name="Wilson R."/>
            <person name="Emanuel B.S."/>
            <person name="Shaikh T."/>
            <person name="Kurahashi H."/>
            <person name="Saitta S."/>
            <person name="Budarf M.L."/>
            <person name="McDermid H.E."/>
            <person name="Johnson A."/>
            <person name="Wong A.C.C."/>
            <person name="Morrow B.E."/>
            <person name="Edelmann L."/>
            <person name="Kim U.J."/>
            <person name="Shizuya H."/>
            <person name="Simon M.I."/>
            <person name="Dumanski J.P."/>
            <person name="Peyrard M."/>
            <person name="Kedra D."/>
            <person name="Seroussi E."/>
            <person name="Fransson I."/>
            <person name="Tapia I."/>
            <person name="Bruder C.E."/>
            <person name="O'Brien K.P."/>
            <person name="Wilkinson P."/>
            <person name="Bodenteich A."/>
            <person name="Hartman K."/>
            <person name="Hu X."/>
            <person name="Khan A.S."/>
            <person name="Lane L."/>
            <person name="Tilahun Y."/>
            <person name="Wright H."/>
        </authorList>
    </citation>
    <scope>NUCLEOTIDE SEQUENCE [LARGE SCALE GENOMIC DNA]</scope>
</reference>
<reference key="5">
    <citation type="submission" date="2005-07" db="EMBL/GenBank/DDBJ databases">
        <authorList>
            <person name="Mural R.J."/>
            <person name="Istrail S."/>
            <person name="Sutton G."/>
            <person name="Florea L."/>
            <person name="Halpern A.L."/>
            <person name="Mobarry C.M."/>
            <person name="Lippert R."/>
            <person name="Walenz B."/>
            <person name="Shatkay H."/>
            <person name="Dew I."/>
            <person name="Miller J.R."/>
            <person name="Flanigan M.J."/>
            <person name="Edwards N.J."/>
            <person name="Bolanos R."/>
            <person name="Fasulo D."/>
            <person name="Halldorsson B.V."/>
            <person name="Hannenhalli S."/>
            <person name="Turner R."/>
            <person name="Yooseph S."/>
            <person name="Lu F."/>
            <person name="Nusskern D.R."/>
            <person name="Shue B.C."/>
            <person name="Zheng X.H."/>
            <person name="Zhong F."/>
            <person name="Delcher A.L."/>
            <person name="Huson D.H."/>
            <person name="Kravitz S.A."/>
            <person name="Mouchard L."/>
            <person name="Reinert K."/>
            <person name="Remington K.A."/>
            <person name="Clark A.G."/>
            <person name="Waterman M.S."/>
            <person name="Eichler E.E."/>
            <person name="Adams M.D."/>
            <person name="Hunkapiller M.W."/>
            <person name="Myers E.W."/>
            <person name="Venter J.C."/>
        </authorList>
    </citation>
    <scope>NUCLEOTIDE SEQUENCE [LARGE SCALE GENOMIC DNA]</scope>
</reference>
<reference key="6">
    <citation type="journal article" date="2004" name="Genome Res.">
        <title>The status, quality, and expansion of the NIH full-length cDNA project: the Mammalian Gene Collection (MGC).</title>
        <authorList>
            <consortium name="The MGC Project Team"/>
        </authorList>
    </citation>
    <scope>NUCLEOTIDE SEQUENCE [LARGE SCALE MRNA] (ISOFORM 1)</scope>
    <source>
        <tissue>Colon</tissue>
        <tissue>Lung</tissue>
        <tissue>Muscle</tissue>
        <tissue>Pancreas</tissue>
    </source>
</reference>
<reference key="7">
    <citation type="journal article" date="2011" name="PLoS ONE">
        <title>RNF185, a novel mitochondrial ubiquitin E3 ligase, regulates autophagy through interaction with BNIP1.</title>
        <authorList>
            <person name="Tang F."/>
            <person name="Wang B."/>
            <person name="Li N."/>
            <person name="Wu Y."/>
            <person name="Jia J."/>
            <person name="Suo T."/>
            <person name="Chen Q."/>
            <person name="Liu Y.J."/>
            <person name="Tang J."/>
        </authorList>
    </citation>
    <scope>FUNCTION</scope>
    <scope>CATALYTIC ACTIVITY</scope>
    <scope>PATHWAY</scope>
    <scope>SUBCELLULAR LOCATION</scope>
    <scope>TOPOLOGY</scope>
    <scope>INTERACTION WITH ATG5 AND BNIP1</scope>
</reference>
<reference key="8">
    <citation type="journal article" date="2013" name="J. Biol. Chem.">
        <title>RNF185 is a novel E3 ligase of endoplasmic reticulum-associated degradation (ERAD) that targets cystic fibrosis transmembrane conductance regulator (CFTR).</title>
        <authorList>
            <person name="El Khouri E."/>
            <person name="Le Pavec G."/>
            <person name="Toledano M.B."/>
            <person name="Delaunay-Moisan A."/>
        </authorList>
    </citation>
    <scope>FUNCTION</scope>
    <scope>INDUCTION</scope>
    <scope>SUBCELLULAR LOCATION</scope>
</reference>
<reference key="9">
    <citation type="journal article" date="2016" name="Sci. Rep.">
        <title>Genome-wide identification and gene expression profiling of ubiquitin ligases for endoplasmic reticulum protein degradation.</title>
        <authorList>
            <person name="Kaneko M."/>
            <person name="Iwase I."/>
            <person name="Yamasaki Y."/>
            <person name="Takai T."/>
            <person name="Wu Y."/>
            <person name="Kanemoto S."/>
            <person name="Matsuhisa K."/>
            <person name="Asada R."/>
            <person name="Okuma Y."/>
            <person name="Watanabe T."/>
            <person name="Imaizumi K."/>
            <person name="Nomura Y."/>
        </authorList>
    </citation>
    <scope>FUNCTION</scope>
    <scope>CATALYTIC ACTIVITY</scope>
    <scope>PATHWAY</scope>
    <scope>SUBCELLULAR LOCATION</scope>
    <scope>TISSUE SPECIFICITY</scope>
    <scope>INDUCTION</scope>
    <scope>DOMAIN</scope>
    <scope>MUTAGENESIS OF CYS-39</scope>
</reference>
<reference key="10">
    <citation type="journal article" date="2017" name="PLoS Pathog.">
        <title>The E3 ubiquitin ligase RNF185 facilitates the cGAS-mediated innate immune response.</title>
        <authorList>
            <person name="Wang Q."/>
            <person name="Huang L."/>
            <person name="Hong Z."/>
            <person name="Lv Z."/>
            <person name="Mao Z."/>
            <person name="Tang Y."/>
            <person name="Kong X."/>
            <person name="Li S."/>
            <person name="Cui Y."/>
            <person name="Liu H."/>
            <person name="Zhang L."/>
            <person name="Zhang X."/>
            <person name="Jiang L."/>
            <person name="Wang C."/>
            <person name="Zhou Q."/>
        </authorList>
    </citation>
    <scope>FUNCTION</scope>
    <scope>CATALYTIC ACTIVITY</scope>
    <scope>PATHWAY</scope>
    <scope>MUTAGENESIS OF CYS-39 AND CYS-79</scope>
</reference>
<organism>
    <name type="scientific">Homo sapiens</name>
    <name type="common">Human</name>
    <dbReference type="NCBI Taxonomy" id="9606"/>
    <lineage>
        <taxon>Eukaryota</taxon>
        <taxon>Metazoa</taxon>
        <taxon>Chordata</taxon>
        <taxon>Craniata</taxon>
        <taxon>Vertebrata</taxon>
        <taxon>Euteleostomi</taxon>
        <taxon>Mammalia</taxon>
        <taxon>Eutheria</taxon>
        <taxon>Euarchontoglires</taxon>
        <taxon>Primates</taxon>
        <taxon>Haplorrhini</taxon>
        <taxon>Catarrhini</taxon>
        <taxon>Hominidae</taxon>
        <taxon>Homo</taxon>
    </lineage>
</organism>
<proteinExistence type="evidence at protein level"/>
<sequence>MASKGPSASASPENSSAGGPSGSSNGAGESGGQDSTFECNICLDTAKDAVISLCGHLFCWPCLHQWLETRPNRQVCPVCKAGISRDKVIPLYGRGSTGQQDPREKTPPRPQGQRPEPENRGGFQGFGFGDGGFQMSFGIGAFPFGIFATAFNINDGRPPPAVPGTPQYVDEQFLSRLFLFVALVIMFWLLIA</sequence>
<protein>
    <recommendedName>
        <fullName evidence="10">E3 ubiquitin-protein ligase RNF185</fullName>
        <ecNumber evidence="4 6 7">2.3.2.27</ecNumber>
    </recommendedName>
    <alternativeName>
        <fullName>RING finger protein 185</fullName>
    </alternativeName>
</protein>
<dbReference type="EC" id="2.3.2.27" evidence="4 6 7"/>
<dbReference type="EMBL" id="DQ296559">
    <property type="protein sequence ID" value="ABB97506.1"/>
    <property type="molecule type" value="mRNA"/>
</dbReference>
<dbReference type="EMBL" id="DQ296561">
    <property type="protein sequence ID" value="ABB97508.1"/>
    <property type="molecule type" value="mRNA"/>
</dbReference>
<dbReference type="EMBL" id="DQ296562">
    <property type="protein sequence ID" value="ABB97509.1"/>
    <property type="molecule type" value="mRNA"/>
</dbReference>
<dbReference type="EMBL" id="DQ296565">
    <property type="protein sequence ID" value="ABB97512.1"/>
    <property type="molecule type" value="mRNA"/>
</dbReference>
<dbReference type="EMBL" id="CR456349">
    <property type="protein sequence ID" value="CAG30235.1"/>
    <property type="molecule type" value="mRNA"/>
</dbReference>
<dbReference type="EMBL" id="AK095947">
    <property type="protein sequence ID" value="BAC04659.1"/>
    <property type="molecule type" value="mRNA"/>
</dbReference>
<dbReference type="EMBL" id="AK291236">
    <property type="protein sequence ID" value="BAF83925.1"/>
    <property type="molecule type" value="mRNA"/>
</dbReference>
<dbReference type="EMBL" id="AC002073">
    <property type="status" value="NOT_ANNOTATED_CDS"/>
    <property type="molecule type" value="Genomic_DNA"/>
</dbReference>
<dbReference type="EMBL" id="AC005005">
    <property type="status" value="NOT_ANNOTATED_CDS"/>
    <property type="molecule type" value="Genomic_DNA"/>
</dbReference>
<dbReference type="EMBL" id="CH471095">
    <property type="protein sequence ID" value="EAW59947.1"/>
    <property type="molecule type" value="Genomic_DNA"/>
</dbReference>
<dbReference type="EMBL" id="CH471095">
    <property type="protein sequence ID" value="EAW59949.1"/>
    <property type="molecule type" value="Genomic_DNA"/>
</dbReference>
<dbReference type="EMBL" id="BC009504">
    <property type="protein sequence ID" value="AAH09504.1"/>
    <property type="molecule type" value="mRNA"/>
</dbReference>
<dbReference type="EMBL" id="BC026040">
    <property type="protein sequence ID" value="AAH26040.1"/>
    <property type="molecule type" value="mRNA"/>
</dbReference>
<dbReference type="EMBL" id="BC033166">
    <property type="protein sequence ID" value="AAH33166.1"/>
    <property type="molecule type" value="mRNA"/>
</dbReference>
<dbReference type="EMBL" id="BC012817">
    <property type="protein sequence ID" value="AAH12817.1"/>
    <property type="molecule type" value="mRNA"/>
</dbReference>
<dbReference type="EMBL" id="BC035684">
    <property type="protein sequence ID" value="AAH35684.1"/>
    <property type="molecule type" value="mRNA"/>
</dbReference>
<dbReference type="CCDS" id="CCDS13890.1">
    <molecule id="Q96GF1-1"/>
</dbReference>
<dbReference type="CCDS" id="CCDS46689.1">
    <molecule id="Q96GF1-2"/>
</dbReference>
<dbReference type="RefSeq" id="NP_001129297.1">
    <molecule id="Q96GF1-2"/>
    <property type="nucleotide sequence ID" value="NM_001135825.2"/>
</dbReference>
<dbReference type="RefSeq" id="NP_689480.2">
    <molecule id="Q96GF1-1"/>
    <property type="nucleotide sequence ID" value="NM_152267.3"/>
</dbReference>
<dbReference type="SMR" id="Q96GF1"/>
<dbReference type="BioGRID" id="124834">
    <property type="interactions" value="188"/>
</dbReference>
<dbReference type="FunCoup" id="Q96GF1">
    <property type="interactions" value="1258"/>
</dbReference>
<dbReference type="IntAct" id="Q96GF1">
    <property type="interactions" value="82"/>
</dbReference>
<dbReference type="MINT" id="Q96GF1"/>
<dbReference type="STRING" id="9606.ENSP00000320508"/>
<dbReference type="iPTMnet" id="Q96GF1"/>
<dbReference type="PhosphoSitePlus" id="Q96GF1"/>
<dbReference type="BioMuta" id="RNF185"/>
<dbReference type="DMDM" id="74751883"/>
<dbReference type="jPOST" id="Q96GF1"/>
<dbReference type="MassIVE" id="Q96GF1"/>
<dbReference type="PaxDb" id="9606-ENSP00000320508"/>
<dbReference type="PeptideAtlas" id="Q96GF1"/>
<dbReference type="ProteomicsDB" id="76632">
    <molecule id="Q96GF1-1"/>
</dbReference>
<dbReference type="ProteomicsDB" id="76633">
    <molecule id="Q96GF1-2"/>
</dbReference>
<dbReference type="Pumba" id="Q96GF1"/>
<dbReference type="TopDownProteomics" id="Q96GF1-1">
    <molecule id="Q96GF1-1"/>
</dbReference>
<dbReference type="TopDownProteomics" id="Q96GF1-2">
    <molecule id="Q96GF1-2"/>
</dbReference>
<dbReference type="Antibodypedia" id="24963">
    <property type="antibodies" value="148 antibodies from 23 providers"/>
</dbReference>
<dbReference type="DNASU" id="91445"/>
<dbReference type="Ensembl" id="ENST00000266252.8">
    <molecule id="Q96GF1-2"/>
    <property type="protein sequence ID" value="ENSP00000266252.7"/>
    <property type="gene ID" value="ENSG00000138942.17"/>
</dbReference>
<dbReference type="Ensembl" id="ENST00000326132.11">
    <molecule id="Q96GF1-1"/>
    <property type="protein sequence ID" value="ENSP00000320508.5"/>
    <property type="gene ID" value="ENSG00000138942.17"/>
</dbReference>
<dbReference type="Ensembl" id="ENST00000518626.5">
    <molecule id="Q96GF1-1"/>
    <property type="protein sequence ID" value="ENSP00000427755.1"/>
    <property type="gene ID" value="ENSG00000138942.17"/>
</dbReference>
<dbReference type="GeneID" id="91445"/>
<dbReference type="KEGG" id="hsa:91445"/>
<dbReference type="MANE-Select" id="ENST00000326132.11">
    <property type="protein sequence ID" value="ENSP00000320508.5"/>
    <property type="RefSeq nucleotide sequence ID" value="NM_152267.4"/>
    <property type="RefSeq protein sequence ID" value="NP_689480.2"/>
</dbReference>
<dbReference type="UCSC" id="uc003akb.4">
    <molecule id="Q96GF1-1"/>
    <property type="organism name" value="human"/>
</dbReference>
<dbReference type="AGR" id="HGNC:26783"/>
<dbReference type="CTD" id="91445"/>
<dbReference type="DisGeNET" id="91445"/>
<dbReference type="GeneCards" id="RNF185"/>
<dbReference type="HGNC" id="HGNC:26783">
    <property type="gene designation" value="RNF185"/>
</dbReference>
<dbReference type="HPA" id="ENSG00000138942">
    <property type="expression patterns" value="Low tissue specificity"/>
</dbReference>
<dbReference type="MIM" id="620096">
    <property type="type" value="gene"/>
</dbReference>
<dbReference type="neXtProt" id="NX_Q96GF1"/>
<dbReference type="OpenTargets" id="ENSG00000138942"/>
<dbReference type="PharmGKB" id="PA142671056"/>
<dbReference type="VEuPathDB" id="HostDB:ENSG00000138942"/>
<dbReference type="eggNOG" id="KOG0823">
    <property type="taxonomic scope" value="Eukaryota"/>
</dbReference>
<dbReference type="GeneTree" id="ENSGT00390000014107"/>
<dbReference type="HOGENOM" id="CLU_055198_2_2_1"/>
<dbReference type="InParanoid" id="Q96GF1"/>
<dbReference type="OMA" id="RPNRQTC"/>
<dbReference type="OrthoDB" id="302966at2759"/>
<dbReference type="PAN-GO" id="Q96GF1">
    <property type="GO annotations" value="4 GO annotations based on evolutionary models"/>
</dbReference>
<dbReference type="PhylomeDB" id="Q96GF1"/>
<dbReference type="TreeFam" id="TF317334"/>
<dbReference type="PathwayCommons" id="Q96GF1"/>
<dbReference type="Reactome" id="R-HSA-382556">
    <property type="pathway name" value="ABC-family proteins mediated transport"/>
</dbReference>
<dbReference type="Reactome" id="R-HSA-5678895">
    <property type="pathway name" value="Defective CFTR causes cystic fibrosis"/>
</dbReference>
<dbReference type="Reactome" id="R-HSA-901032">
    <property type="pathway name" value="ER Quality Control Compartment (ERQC)"/>
</dbReference>
<dbReference type="SignaLink" id="Q96GF1"/>
<dbReference type="SIGNOR" id="Q96GF1"/>
<dbReference type="UniPathway" id="UPA00143"/>
<dbReference type="BioGRID-ORCS" id="91445">
    <property type="hits" value="15 hits in 1194 CRISPR screens"/>
</dbReference>
<dbReference type="ChiTaRS" id="RNF185">
    <property type="organism name" value="human"/>
</dbReference>
<dbReference type="GenomeRNAi" id="91445"/>
<dbReference type="Pharos" id="Q96GF1">
    <property type="development level" value="Tbio"/>
</dbReference>
<dbReference type="PRO" id="PR:Q96GF1"/>
<dbReference type="Proteomes" id="UP000005640">
    <property type="component" value="Chromosome 22"/>
</dbReference>
<dbReference type="RNAct" id="Q96GF1">
    <property type="molecule type" value="protein"/>
</dbReference>
<dbReference type="Bgee" id="ENSG00000138942">
    <property type="expression patterns" value="Expressed in kidney epithelium and 181 other cell types or tissues"/>
</dbReference>
<dbReference type="ExpressionAtlas" id="Q96GF1">
    <property type="expression patterns" value="baseline and differential"/>
</dbReference>
<dbReference type="GO" id="GO:0005783">
    <property type="term" value="C:endoplasmic reticulum"/>
    <property type="evidence" value="ECO:0000314"/>
    <property type="project" value="UniProtKB"/>
</dbReference>
<dbReference type="GO" id="GO:0005789">
    <property type="term" value="C:endoplasmic reticulum membrane"/>
    <property type="evidence" value="ECO:0000304"/>
    <property type="project" value="Reactome"/>
</dbReference>
<dbReference type="GO" id="GO:0044322">
    <property type="term" value="C:endoplasmic reticulum quality control compartment"/>
    <property type="evidence" value="ECO:0007669"/>
    <property type="project" value="GOC"/>
</dbReference>
<dbReference type="GO" id="GO:0005741">
    <property type="term" value="C:mitochondrial outer membrane"/>
    <property type="evidence" value="ECO:0007669"/>
    <property type="project" value="UniProtKB-SubCell"/>
</dbReference>
<dbReference type="GO" id="GO:0044877">
    <property type="term" value="F:protein-containing complex binding"/>
    <property type="evidence" value="ECO:0000353"/>
    <property type="project" value="ParkinsonsUK-UCL"/>
</dbReference>
<dbReference type="GO" id="GO:0043130">
    <property type="term" value="F:ubiquitin binding"/>
    <property type="evidence" value="ECO:0000314"/>
    <property type="project" value="UniProtKB"/>
</dbReference>
<dbReference type="GO" id="GO:0061630">
    <property type="term" value="F:ubiquitin protein ligase activity"/>
    <property type="evidence" value="ECO:0000314"/>
    <property type="project" value="UniProtKB"/>
</dbReference>
<dbReference type="GO" id="GO:0044390">
    <property type="term" value="F:ubiquitin-like protein conjugating enzyme binding"/>
    <property type="evidence" value="ECO:0000353"/>
    <property type="project" value="ParkinsonsUK-UCL"/>
</dbReference>
<dbReference type="GO" id="GO:0008270">
    <property type="term" value="F:zinc ion binding"/>
    <property type="evidence" value="ECO:0007669"/>
    <property type="project" value="UniProtKB-KW"/>
</dbReference>
<dbReference type="GO" id="GO:0006914">
    <property type="term" value="P:autophagy"/>
    <property type="evidence" value="ECO:0007669"/>
    <property type="project" value="UniProtKB-KW"/>
</dbReference>
<dbReference type="GO" id="GO:0051607">
    <property type="term" value="P:defense response to virus"/>
    <property type="evidence" value="ECO:0000314"/>
    <property type="project" value="UniProtKB"/>
</dbReference>
<dbReference type="GO" id="GO:1904380">
    <property type="term" value="P:endoplasmic reticulum mannose trimming"/>
    <property type="evidence" value="ECO:0000304"/>
    <property type="project" value="Reactome"/>
</dbReference>
<dbReference type="GO" id="GO:0036503">
    <property type="term" value="P:ERAD pathway"/>
    <property type="evidence" value="ECO:0000316"/>
    <property type="project" value="ParkinsonsUK-UCL"/>
</dbReference>
<dbReference type="GO" id="GO:0045087">
    <property type="term" value="P:innate immune response"/>
    <property type="evidence" value="ECO:0007669"/>
    <property type="project" value="UniProtKB-KW"/>
</dbReference>
<dbReference type="GO" id="GO:1904294">
    <property type="term" value="P:positive regulation of ERAD pathway"/>
    <property type="evidence" value="ECO:0000315"/>
    <property type="project" value="UniProtKB"/>
</dbReference>
<dbReference type="GO" id="GO:0045089">
    <property type="term" value="P:positive regulation of innate immune response"/>
    <property type="evidence" value="ECO:0000314"/>
    <property type="project" value="UniProt"/>
</dbReference>
<dbReference type="GO" id="GO:0060340">
    <property type="term" value="P:positive regulation of type I interferon-mediated signaling pathway"/>
    <property type="evidence" value="ECO:0000314"/>
    <property type="project" value="UniProtKB"/>
</dbReference>
<dbReference type="GO" id="GO:0051865">
    <property type="term" value="P:protein autoubiquitination"/>
    <property type="evidence" value="ECO:0000314"/>
    <property type="project" value="UniProtKB"/>
</dbReference>
<dbReference type="GO" id="GO:0044314">
    <property type="term" value="P:protein K27-linked ubiquitination"/>
    <property type="evidence" value="ECO:0000314"/>
    <property type="project" value="UniProtKB"/>
</dbReference>
<dbReference type="GO" id="GO:0055085">
    <property type="term" value="P:transmembrane transport"/>
    <property type="evidence" value="ECO:0000304"/>
    <property type="project" value="Reactome"/>
</dbReference>
<dbReference type="GO" id="GO:0006511">
    <property type="term" value="P:ubiquitin-dependent protein catabolic process"/>
    <property type="evidence" value="ECO:0000315"/>
    <property type="project" value="ParkinsonsUK-UCL"/>
</dbReference>
<dbReference type="CDD" id="cd16744">
    <property type="entry name" value="RING-HC_RNF185"/>
    <property type="match status" value="1"/>
</dbReference>
<dbReference type="FunFam" id="3.30.40.10:FF:000062">
    <property type="entry name" value="E3 ubiquitin-protein ligase RNF185"/>
    <property type="match status" value="1"/>
</dbReference>
<dbReference type="Gene3D" id="3.30.40.10">
    <property type="entry name" value="Zinc/RING finger domain, C3HC4 (zinc finger)"/>
    <property type="match status" value="1"/>
</dbReference>
<dbReference type="InterPro" id="IPR045103">
    <property type="entry name" value="RNF5/RNF185-like"/>
</dbReference>
<dbReference type="InterPro" id="IPR018957">
    <property type="entry name" value="Znf_C3HC4_RING-type"/>
</dbReference>
<dbReference type="InterPro" id="IPR001841">
    <property type="entry name" value="Znf_RING"/>
</dbReference>
<dbReference type="InterPro" id="IPR013083">
    <property type="entry name" value="Znf_RING/FYVE/PHD"/>
</dbReference>
<dbReference type="InterPro" id="IPR017907">
    <property type="entry name" value="Znf_RING_CS"/>
</dbReference>
<dbReference type="PANTHER" id="PTHR12313">
    <property type="entry name" value="E3 UBIQUITIN-PROTEIN LIGASE RNF5-RELATED"/>
    <property type="match status" value="1"/>
</dbReference>
<dbReference type="Pfam" id="PF00097">
    <property type="entry name" value="zf-C3HC4"/>
    <property type="match status" value="1"/>
</dbReference>
<dbReference type="SMART" id="SM00184">
    <property type="entry name" value="RING"/>
    <property type="match status" value="1"/>
</dbReference>
<dbReference type="SUPFAM" id="SSF57850">
    <property type="entry name" value="RING/U-box"/>
    <property type="match status" value="1"/>
</dbReference>
<dbReference type="PROSITE" id="PS00518">
    <property type="entry name" value="ZF_RING_1"/>
    <property type="match status" value="1"/>
</dbReference>
<dbReference type="PROSITE" id="PS50089">
    <property type="entry name" value="ZF_RING_2"/>
    <property type="match status" value="1"/>
</dbReference>
<feature type="chain" id="PRO_0000247520" description="E3 ubiquitin-protein ligase RNF185">
    <location>
        <begin position="1"/>
        <end position="192"/>
    </location>
</feature>
<feature type="topological domain" description="Cytoplasmic" evidence="4">
    <location>
        <begin position="1"/>
        <end position="130"/>
    </location>
</feature>
<feature type="transmembrane region" description="Helical" evidence="1">
    <location>
        <begin position="131"/>
        <end position="151"/>
    </location>
</feature>
<feature type="topological domain" description="Mitochondrial intermembrane" evidence="4">
    <location>
        <begin position="152"/>
        <end position="171"/>
    </location>
</feature>
<feature type="transmembrane region" description="Helical" evidence="1">
    <location>
        <begin position="172"/>
        <end position="192"/>
    </location>
</feature>
<feature type="zinc finger region" description="RING-type" evidence="2">
    <location>
        <begin position="39"/>
        <end position="80"/>
    </location>
</feature>
<feature type="region of interest" description="Disordered" evidence="3">
    <location>
        <begin position="1"/>
        <end position="30"/>
    </location>
</feature>
<feature type="region of interest" description="Required for ubiquitin ligase activity and protection against ER stress-induced cell death" evidence="6">
    <location>
        <begin position="29"/>
        <end position="80"/>
    </location>
</feature>
<feature type="region of interest" description="Disordered" evidence="3">
    <location>
        <begin position="90"/>
        <end position="123"/>
    </location>
</feature>
<feature type="compositionally biased region" description="Low complexity" evidence="3">
    <location>
        <begin position="1"/>
        <end position="27"/>
    </location>
</feature>
<feature type="splice variant" id="VSP_020004" description="In isoform 2." evidence="8 9">
    <location>
        <begin position="66"/>
        <end position="121"/>
    </location>
</feature>
<feature type="mutagenesis site" description="Abolished E3 ubiquitin-protein ligase activity and ability to regulate the cGAS-STING pathway; when associated with A-79." evidence="7">
    <original>C</original>
    <variation>A</variation>
    <location>
        <position position="39"/>
    </location>
</feature>
<feature type="mutagenesis site" description="Decreased ubiquitin ligase activity." evidence="6">
    <original>C</original>
    <variation>S</variation>
    <location>
        <position position="39"/>
    </location>
</feature>
<feature type="mutagenesis site" description="Abolished E3 ubiquitin-protein ligase activity and ability to regulate the cGAS-STING pathway; when associated with A-39." evidence="7">
    <original>C</original>
    <variation>A</variation>
    <location>
        <position position="79"/>
    </location>
</feature>
<keyword id="KW-0025">Alternative splicing</keyword>
<keyword id="KW-0072">Autophagy</keyword>
<keyword id="KW-0256">Endoplasmic reticulum</keyword>
<keyword id="KW-0391">Immunity</keyword>
<keyword id="KW-0399">Innate immunity</keyword>
<keyword id="KW-0472">Membrane</keyword>
<keyword id="KW-0479">Metal-binding</keyword>
<keyword id="KW-0496">Mitochondrion</keyword>
<keyword id="KW-1000">Mitochondrion outer membrane</keyword>
<keyword id="KW-1267">Proteomics identification</keyword>
<keyword id="KW-1185">Reference proteome</keyword>
<keyword id="KW-0808">Transferase</keyword>
<keyword id="KW-0812">Transmembrane</keyword>
<keyword id="KW-1133">Transmembrane helix</keyword>
<keyword id="KW-0833">Ubl conjugation pathway</keyword>
<keyword id="KW-0862">Zinc</keyword>
<keyword id="KW-0863">Zinc-finger</keyword>
<comment type="function">
    <text evidence="4 5 6 7">E3 ubiquitin-protein ligase that regulates selective mitochondrial autophagy by mediating 'Lys-63'-linked polyubiquitination of BNIP1 (PubMed:21931693). Acts in the endoplasmic reticulum (ER)-associated degradation (ERAD) pathway, which targets misfolded proteins that accumulate in the endoplasmic reticulum (ER) for ubiquitination and subsequent proteasome-mediated degradation (PubMed:27485036). Protects cells from ER stress-induced apoptosis (PubMed:27485036). Responsible for the cotranslational ubiquitination and degradation of CFTR in the ERAD pathway (PubMed:24019521). Also acts as a regulator of the innate antiviral response by catalyzing 'Lys-27'-linked polyubiquitination of CGAS at 'Lys-173' and 'Lys-384', thereby promoting CGAS cyclic GMP-AMP synthase activity (PubMed:28273161). Preferentially associates with the E2 enzymes UBE2J1 and UBE2J2 (PubMed:24019521).</text>
</comment>
<comment type="catalytic activity">
    <reaction evidence="4 6 7">
        <text>S-ubiquitinyl-[E2 ubiquitin-conjugating enzyme]-L-cysteine + [acceptor protein]-L-lysine = [E2 ubiquitin-conjugating enzyme]-L-cysteine + N(6)-ubiquitinyl-[acceptor protein]-L-lysine.</text>
        <dbReference type="EC" id="2.3.2.27"/>
    </reaction>
</comment>
<comment type="pathway">
    <text evidence="4 6 7">Protein modification; protein ubiquitination.</text>
</comment>
<comment type="subunit">
    <text evidence="4">Interacts with ATG5 and BNIP1.</text>
</comment>
<comment type="interaction">
    <interactant intactId="EBI-2340249">
        <id>Q96GF1</id>
    </interactant>
    <interactant intactId="EBI-2860752">
        <id>O75915</id>
        <label>ARL6IP5</label>
    </interactant>
    <organismsDiffer>false</organismsDiffer>
    <experiments>3</experiments>
</comment>
<comment type="interaction">
    <interactant intactId="EBI-2340249">
        <id>Q96GF1</id>
    </interactant>
    <interactant intactId="EBI-2548702">
        <id>Q96DZ9</id>
        <label>CMTM5</label>
    </interactant>
    <organismsDiffer>false</organismsDiffer>
    <experiments>3</experiments>
</comment>
<comment type="interaction">
    <interactant intactId="EBI-2340249">
        <id>Q96GF1</id>
    </interactant>
    <interactant intactId="EBI-10269179">
        <id>Q8NBI2</id>
        <label>CYB561A3</label>
    </interactant>
    <organismsDiffer>false</organismsDiffer>
    <experiments>3</experiments>
</comment>
<comment type="interaction">
    <interactant intactId="EBI-2340249">
        <id>Q96GF1</id>
    </interactant>
    <interactant intactId="EBI-12118888">
        <id>Q96D05-2</id>
        <label>FAM241B</label>
    </interactant>
    <organismsDiffer>false</organismsDiffer>
    <experiments>3</experiments>
</comment>
<comment type="interaction">
    <interactant intactId="EBI-2340249">
        <id>Q96GF1</id>
    </interactant>
    <interactant intactId="EBI-750078">
        <id>Q13021</id>
        <label>MALL</label>
    </interactant>
    <organismsDiffer>false</organismsDiffer>
    <experiments>3</experiments>
</comment>
<comment type="interaction">
    <interactant intactId="EBI-2340249">
        <id>Q96GF1</id>
    </interactant>
    <interactant intactId="EBI-12070086">
        <id>Q5J8X5</id>
        <label>MS4A13</label>
    </interactant>
    <organismsDiffer>false</organismsDiffer>
    <experiments>3</experiments>
</comment>
<comment type="interaction">
    <interactant intactId="EBI-2340249">
        <id>Q96GF1</id>
    </interactant>
    <interactant intactId="EBI-17641390">
        <id>A6NDP7</id>
        <label>MYADML2</label>
    </interactant>
    <organismsDiffer>false</organismsDiffer>
    <experiments>3</experiments>
</comment>
<comment type="interaction">
    <interactant intactId="EBI-2340249">
        <id>Q96GF1</id>
    </interactant>
    <interactant intactId="EBI-9550165">
        <id>Q0D2K0</id>
        <label>NIPAL4</label>
    </interactant>
    <organismsDiffer>false</organismsDiffer>
    <experiments>3</experiments>
</comment>
<comment type="interaction">
    <interactant intactId="EBI-2340249">
        <id>Q96GF1</id>
    </interactant>
    <interactant intactId="EBI-348482">
        <id>Q99942</id>
        <label>RNF5</label>
    </interactant>
    <organismsDiffer>false</organismsDiffer>
    <experiments>4</experiments>
</comment>
<comment type="interaction">
    <interactant intactId="EBI-2340249">
        <id>Q96GF1</id>
    </interactant>
    <interactant intactId="EBI-1045825">
        <id>P55061</id>
        <label>TMBIM6</label>
    </interactant>
    <organismsDiffer>false</organismsDiffer>
    <experiments>5</experiments>
</comment>
<comment type="interaction">
    <interactant intactId="EBI-2340249">
        <id>Q96GF1</id>
    </interactant>
    <interactant intactId="EBI-348587">
        <id>Q9BVK8</id>
        <label>TMEM147</label>
    </interactant>
    <organismsDiffer>false</organismsDiffer>
    <experiments>3</experiments>
</comment>
<comment type="interaction">
    <interactant intactId="EBI-2340249">
        <id>Q96GF1</id>
    </interactant>
    <interactant intactId="EBI-741829">
        <id>Q96HH6</id>
        <label>TMEM19</label>
    </interactant>
    <organismsDiffer>false</organismsDiffer>
    <experiments>3</experiments>
</comment>
<comment type="interaction">
    <interactant intactId="EBI-2340249">
        <id>Q96GF1</id>
    </interactant>
    <interactant intactId="EBI-12015604">
        <id>Q8N2M4</id>
        <label>TMEM86A</label>
    </interactant>
    <organismsDiffer>false</organismsDiffer>
    <experiments>3</experiments>
</comment>
<comment type="interaction">
    <interactant intactId="EBI-2340249">
        <id>Q96GF1</id>
    </interactant>
    <interactant intactId="EBI-743540">
        <id>P51668</id>
        <label>UBE2D1</label>
    </interactant>
    <organismsDiffer>false</organismsDiffer>
    <experiments>4</experiments>
</comment>
<comment type="interaction">
    <interactant intactId="EBI-2340249">
        <id>Q96GF1</id>
    </interactant>
    <interactant intactId="EBI-347677">
        <id>P62837</id>
        <label>UBE2D2</label>
    </interactant>
    <organismsDiffer>false</organismsDiffer>
    <experiments>4</experiments>
</comment>
<comment type="interaction">
    <interactant intactId="EBI-2340249">
        <id>Q96GF1</id>
    </interactant>
    <interactant intactId="EBI-745527">
        <id>Q9Y2X8</id>
        <label>UBE2D4</label>
    </interactant>
    <organismsDiffer>false</organismsDiffer>
    <experiments>4</experiments>
</comment>
<comment type="interaction">
    <interactant intactId="EBI-2340249">
        <id>Q96GF1</id>
    </interactant>
    <interactant intactId="EBI-2129763">
        <id>Q96LR5</id>
        <label>UBE2E2</label>
    </interactant>
    <organismsDiffer>false</organismsDiffer>
    <experiments>4</experiments>
</comment>
<comment type="interaction">
    <interactant intactId="EBI-2340249">
        <id>Q96GF1</id>
    </interactant>
    <interactant intactId="EBI-348496">
        <id>Q969T4</id>
        <label>UBE2E3</label>
    </interactant>
    <organismsDiffer>false</organismsDiffer>
    <experiments>8</experiments>
</comment>
<comment type="interaction">
    <interactant intactId="EBI-2340249">
        <id>Q96GF1</id>
    </interactant>
    <interactant intactId="EBI-473850">
        <id>P61086</id>
        <label>UBE2K</label>
    </interactant>
    <organismsDiffer>false</organismsDiffer>
    <experiments>3</experiments>
</comment>
<comment type="interaction">
    <interactant intactId="EBI-2340249">
        <id>Q96GF1</id>
    </interactant>
    <interactant intactId="EBI-751204">
        <id>Q9BWQ6</id>
        <label>YIPF2</label>
    </interactant>
    <organismsDiffer>false</organismsDiffer>
    <experiments>6</experiments>
</comment>
<comment type="interaction">
    <interactant intactId="EBI-2340249">
        <id>Q96GF1</id>
    </interactant>
    <interactant intactId="EBI-751253">
        <id>Q9BSR8</id>
        <label>YIPF4</label>
    </interactant>
    <organismsDiffer>false</organismsDiffer>
    <experiments>3</experiments>
</comment>
<comment type="interaction">
    <interactant intactId="EBI-2340249">
        <id>Q96GF1</id>
    </interactant>
    <interactant intactId="EBI-751210">
        <id>Q96EC8</id>
        <label>YIPF6</label>
    </interactant>
    <organismsDiffer>false</organismsDiffer>
    <experiments>3</experiments>
</comment>
<comment type="subcellular location">
    <subcellularLocation>
        <location evidence="4">Mitochondrion outer membrane</location>
        <topology evidence="1">Multi-pass membrane protein</topology>
    </subcellularLocation>
    <subcellularLocation>
        <location evidence="5 6">Endoplasmic reticulum membrane</location>
        <topology evidence="1">Multi-pass membrane protein</topology>
    </subcellularLocation>
</comment>
<comment type="alternative products">
    <event type="alternative splicing"/>
    <isoform>
        <id>Q96GF1-1</id>
        <name>1</name>
        <sequence type="displayed"/>
    </isoform>
    <isoform>
        <id>Q96GF1-2</id>
        <name>2</name>
        <sequence type="described" ref="VSP_020004"/>
    </isoform>
</comment>
<comment type="tissue specificity">
    <text evidence="6">Ubiquitously expressed.</text>
</comment>
<comment type="induction">
    <text evidence="5 6">Up-regulated by unfolded protein response (UPR) and endoplasmic reticulum (ER) stress triggered by thapsigargin or tunicamycin.</text>
</comment>
<comment type="domain">
    <text evidence="6">The RING-type zinc finger domain is responsible for E3 ubiquitin ligase activity.</text>
</comment>
<evidence type="ECO:0000255" key="1"/>
<evidence type="ECO:0000255" key="2">
    <source>
        <dbReference type="PROSITE-ProRule" id="PRU00175"/>
    </source>
</evidence>
<evidence type="ECO:0000256" key="3">
    <source>
        <dbReference type="SAM" id="MobiDB-lite"/>
    </source>
</evidence>
<evidence type="ECO:0000269" key="4">
    <source>
    </source>
</evidence>
<evidence type="ECO:0000269" key="5">
    <source>
    </source>
</evidence>
<evidence type="ECO:0000269" key="6">
    <source>
    </source>
</evidence>
<evidence type="ECO:0000269" key="7">
    <source>
    </source>
</evidence>
<evidence type="ECO:0000303" key="8">
    <source>
    </source>
</evidence>
<evidence type="ECO:0000303" key="9">
    <source ref="1"/>
</evidence>
<evidence type="ECO:0000305" key="10"/>
<evidence type="ECO:0000312" key="11">
    <source>
        <dbReference type="HGNC" id="HGNC:26783"/>
    </source>
</evidence>
<accession>Q96GF1</accession>
<accession>A8K5C1</accession>
<accession>A9X3T8</accession>
<accession>Q8N900</accession>
<name>RN185_HUMAN</name>